<sequence>MTAQQNTSLASFTGDAQPYGGGDPYADYRTADLPFTQYANLADRQLGAGVVAANDEFFAQRENLLVPEPAEFDPEHFGHKGKVMDGWETRRRRGVSAEQPWPTEEDHDWALIRLGAPGVIRGIVVDTAHFRGNYPQAVSVEGASVAGSPSPEELLADDVKWTTLVPRTPVGGHAANGFAVSAEQRFTHLRLKQHPDGGIARLRVYGEVVADPAWLAALGTFDVVALENGGQVEDASNLFYSPATNTIQPGRSRKMDDGWETRRRRDKGNDWIQYRLVDRSQIRAIEIDTAYLKGNSAGWASVSVKDGEAGEWREVLPRTRMQPDTNHRFVLPEAAVGTHARVDIFPDGGISRLRLFGSLTEDGAARLAARHQELGG</sequence>
<reference key="1">
    <citation type="journal article" date="2002" name="Nature">
        <title>Complete genome sequence of the model actinomycete Streptomyces coelicolor A3(2).</title>
        <authorList>
            <person name="Bentley S.D."/>
            <person name="Chater K.F."/>
            <person name="Cerdeno-Tarraga A.-M."/>
            <person name="Challis G.L."/>
            <person name="Thomson N.R."/>
            <person name="James K.D."/>
            <person name="Harris D.E."/>
            <person name="Quail M.A."/>
            <person name="Kieser H."/>
            <person name="Harper D."/>
            <person name="Bateman A."/>
            <person name="Brown S."/>
            <person name="Chandra G."/>
            <person name="Chen C.W."/>
            <person name="Collins M."/>
            <person name="Cronin A."/>
            <person name="Fraser A."/>
            <person name="Goble A."/>
            <person name="Hidalgo J."/>
            <person name="Hornsby T."/>
            <person name="Howarth S."/>
            <person name="Huang C.-H."/>
            <person name="Kieser T."/>
            <person name="Larke L."/>
            <person name="Murphy L.D."/>
            <person name="Oliver K."/>
            <person name="O'Neil S."/>
            <person name="Rabbinowitsch E."/>
            <person name="Rajandream M.A."/>
            <person name="Rutherford K.M."/>
            <person name="Rutter S."/>
            <person name="Seeger K."/>
            <person name="Saunders D."/>
            <person name="Sharp S."/>
            <person name="Squares R."/>
            <person name="Squares S."/>
            <person name="Taylor K."/>
            <person name="Warren T."/>
            <person name="Wietzorrek A."/>
            <person name="Woodward J.R."/>
            <person name="Barrell B.G."/>
            <person name="Parkhill J."/>
            <person name="Hopwood D.A."/>
        </authorList>
    </citation>
    <scope>NUCLEOTIDE SEQUENCE [LARGE SCALE GENOMIC DNA]</scope>
    <source>
        <strain>ATCC BAA-471 / A3(2) / M145</strain>
    </source>
</reference>
<name>ALLC_STRCO</name>
<proteinExistence type="inferred from homology"/>
<feature type="chain" id="PRO_0000205929" description="Probable allantoicase">
    <location>
        <begin position="1"/>
        <end position="376"/>
    </location>
</feature>
<organism>
    <name type="scientific">Streptomyces coelicolor (strain ATCC BAA-471 / A3(2) / M145)</name>
    <dbReference type="NCBI Taxonomy" id="100226"/>
    <lineage>
        <taxon>Bacteria</taxon>
        <taxon>Bacillati</taxon>
        <taxon>Actinomycetota</taxon>
        <taxon>Actinomycetes</taxon>
        <taxon>Kitasatosporales</taxon>
        <taxon>Streptomycetaceae</taxon>
        <taxon>Streptomyces</taxon>
        <taxon>Streptomyces albidoflavus group</taxon>
    </lineage>
</organism>
<evidence type="ECO:0000255" key="1">
    <source>
        <dbReference type="HAMAP-Rule" id="MF_00813"/>
    </source>
</evidence>
<gene>
    <name evidence="1" type="primary">alc</name>
    <name type="ordered locus">SCO6248</name>
    <name type="ORF">SCAH10.13</name>
    <name type="ORF">STAH10.13</name>
</gene>
<comment type="catalytic activity">
    <reaction evidence="1">
        <text>allantoate + H2O = (S)-ureidoglycolate + urea</text>
        <dbReference type="Rhea" id="RHEA:11016"/>
        <dbReference type="ChEBI" id="CHEBI:15377"/>
        <dbReference type="ChEBI" id="CHEBI:16199"/>
        <dbReference type="ChEBI" id="CHEBI:17536"/>
        <dbReference type="ChEBI" id="CHEBI:57296"/>
        <dbReference type="EC" id="3.5.3.4"/>
    </reaction>
</comment>
<comment type="pathway">
    <text evidence="1">Nitrogen metabolism; (S)-allantoin degradation; (S)-ureidoglycolate from allantoate (aminidohydrolase route): step 1/1.</text>
</comment>
<comment type="similarity">
    <text evidence="1">Belongs to the allantoicase family.</text>
</comment>
<dbReference type="EC" id="3.5.3.4" evidence="1"/>
<dbReference type="EMBL" id="AL939126">
    <property type="protein sequence ID" value="CAB60167.1"/>
    <property type="molecule type" value="Genomic_DNA"/>
</dbReference>
<dbReference type="RefSeq" id="NP_630348.1">
    <property type="nucleotide sequence ID" value="NC_003888.3"/>
</dbReference>
<dbReference type="RefSeq" id="WP_011030765.1">
    <property type="nucleotide sequence ID" value="NZ_VNID01000009.1"/>
</dbReference>
<dbReference type="SMR" id="Q9RKU4"/>
<dbReference type="STRING" id="100226.gene:17763907"/>
<dbReference type="PaxDb" id="100226-SCO6248"/>
<dbReference type="KEGG" id="sco:SCO6248"/>
<dbReference type="PATRIC" id="fig|100226.15.peg.6362"/>
<dbReference type="eggNOG" id="COG4266">
    <property type="taxonomic scope" value="Bacteria"/>
</dbReference>
<dbReference type="HOGENOM" id="CLU_038797_1_0_11"/>
<dbReference type="InParanoid" id="Q9RKU4"/>
<dbReference type="OrthoDB" id="2078334at2"/>
<dbReference type="PhylomeDB" id="Q9RKU4"/>
<dbReference type="UniPathway" id="UPA00395">
    <property type="reaction ID" value="UER00654"/>
</dbReference>
<dbReference type="Proteomes" id="UP000001973">
    <property type="component" value="Chromosome"/>
</dbReference>
<dbReference type="GO" id="GO:0004037">
    <property type="term" value="F:allantoicase activity"/>
    <property type="evidence" value="ECO:0007669"/>
    <property type="project" value="UniProtKB-UniRule"/>
</dbReference>
<dbReference type="GO" id="GO:0000256">
    <property type="term" value="P:allantoin catabolic process"/>
    <property type="evidence" value="ECO:0007669"/>
    <property type="project" value="UniProtKB-UniRule"/>
</dbReference>
<dbReference type="GO" id="GO:0006144">
    <property type="term" value="P:purine nucleobase metabolic process"/>
    <property type="evidence" value="ECO:0007669"/>
    <property type="project" value="UniProtKB-KW"/>
</dbReference>
<dbReference type="FunFam" id="2.60.120.260:FF:000120">
    <property type="entry name" value="Probable allantoicase"/>
    <property type="match status" value="1"/>
</dbReference>
<dbReference type="FunFam" id="2.60.120.260:FF:000161">
    <property type="entry name" value="Probable allantoicase"/>
    <property type="match status" value="1"/>
</dbReference>
<dbReference type="Gene3D" id="2.60.120.260">
    <property type="entry name" value="Galactose-binding domain-like"/>
    <property type="match status" value="2"/>
</dbReference>
<dbReference type="HAMAP" id="MF_00813">
    <property type="entry name" value="Allantoicase"/>
    <property type="match status" value="1"/>
</dbReference>
<dbReference type="InterPro" id="IPR005164">
    <property type="entry name" value="Allantoicase"/>
</dbReference>
<dbReference type="InterPro" id="IPR015908">
    <property type="entry name" value="Allantoicase_dom"/>
</dbReference>
<dbReference type="InterPro" id="IPR008979">
    <property type="entry name" value="Galactose-bd-like_sf"/>
</dbReference>
<dbReference type="NCBIfam" id="TIGR02961">
    <property type="entry name" value="allantoicase"/>
    <property type="match status" value="1"/>
</dbReference>
<dbReference type="PANTHER" id="PTHR12045">
    <property type="entry name" value="ALLANTOICASE"/>
    <property type="match status" value="1"/>
</dbReference>
<dbReference type="PANTHER" id="PTHR12045:SF3">
    <property type="entry name" value="INACTIVE ALLANTOICASE-RELATED"/>
    <property type="match status" value="1"/>
</dbReference>
<dbReference type="Pfam" id="PF03561">
    <property type="entry name" value="Allantoicase"/>
    <property type="match status" value="2"/>
</dbReference>
<dbReference type="PIRSF" id="PIRSF016516">
    <property type="entry name" value="Allantoicase"/>
    <property type="match status" value="1"/>
</dbReference>
<dbReference type="SUPFAM" id="SSF49785">
    <property type="entry name" value="Galactose-binding domain-like"/>
    <property type="match status" value="2"/>
</dbReference>
<accession>Q9RKU4</accession>
<protein>
    <recommendedName>
        <fullName evidence="1">Probable allantoicase</fullName>
        <ecNumber evidence="1">3.5.3.4</ecNumber>
    </recommendedName>
    <alternativeName>
        <fullName evidence="1">Allantoate amidinohydrolase</fullName>
    </alternativeName>
</protein>
<keyword id="KW-0378">Hydrolase</keyword>
<keyword id="KW-0659">Purine metabolism</keyword>
<keyword id="KW-1185">Reference proteome</keyword>